<keyword id="KW-0002">3D-structure</keyword>
<keyword id="KW-1015">Disulfide bond</keyword>
<keyword id="KW-0325">Glycoprotein</keyword>
<keyword id="KW-0378">Hydrolase</keyword>
<keyword id="KW-0645">Protease</keyword>
<keyword id="KW-1185">Reference proteome</keyword>
<keyword id="KW-0964">Secreted</keyword>
<keyword id="KW-0720">Serine protease</keyword>
<keyword id="KW-0732">Signal</keyword>
<keyword id="KW-0865">Zymogen</keyword>
<dbReference type="EC" id="3.4.21.35"/>
<dbReference type="EMBL" id="AY290704">
    <property type="protein sequence ID" value="AAQ23714.1"/>
    <property type="molecule type" value="mRNA"/>
</dbReference>
<dbReference type="EMBL" id="AJ428063">
    <property type="protein sequence ID" value="CAD20985.1"/>
    <property type="molecule type" value="mRNA"/>
</dbReference>
<dbReference type="RefSeq" id="NP_001075362.1">
    <property type="nucleotide sequence ID" value="NM_001081893.1"/>
</dbReference>
<dbReference type="PDB" id="1GVZ">
    <property type="method" value="X-ray"/>
    <property type="resolution" value="1.42 A"/>
    <property type="chains" value="A=25-261"/>
</dbReference>
<dbReference type="PDBsum" id="1GVZ"/>
<dbReference type="SMR" id="Q6H321"/>
<dbReference type="STRING" id="9796.ENSECAP00000009529"/>
<dbReference type="MEROPS" id="S01.171"/>
<dbReference type="GlyCosmos" id="Q6H321">
    <property type="glycosylation" value="1 site, No reported glycans"/>
</dbReference>
<dbReference type="PaxDb" id="9796-ENSECAP00000009529"/>
<dbReference type="GeneID" id="100034023"/>
<dbReference type="KEGG" id="ecb:100034023"/>
<dbReference type="CTD" id="100034023"/>
<dbReference type="HOGENOM" id="CLU_006842_1_1_1"/>
<dbReference type="InParanoid" id="Q6H321"/>
<dbReference type="OrthoDB" id="10061449at2759"/>
<dbReference type="TreeFam" id="TF331065"/>
<dbReference type="EvolutionaryTrace" id="Q6H321"/>
<dbReference type="Proteomes" id="UP000002281">
    <property type="component" value="Unplaced"/>
</dbReference>
<dbReference type="GO" id="GO:0005615">
    <property type="term" value="C:extracellular space"/>
    <property type="evidence" value="ECO:0000318"/>
    <property type="project" value="GO_Central"/>
</dbReference>
<dbReference type="GO" id="GO:0030141">
    <property type="term" value="C:secretory granule"/>
    <property type="evidence" value="ECO:0000318"/>
    <property type="project" value="GO_Central"/>
</dbReference>
<dbReference type="GO" id="GO:0004252">
    <property type="term" value="F:serine-type endopeptidase activity"/>
    <property type="evidence" value="ECO:0000318"/>
    <property type="project" value="GO_Central"/>
</dbReference>
<dbReference type="GO" id="GO:0003073">
    <property type="term" value="P:regulation of systemic arterial blood pressure"/>
    <property type="evidence" value="ECO:0000318"/>
    <property type="project" value="GO_Central"/>
</dbReference>
<dbReference type="GO" id="GO:0031638">
    <property type="term" value="P:zymogen activation"/>
    <property type="evidence" value="ECO:0000318"/>
    <property type="project" value="GO_Central"/>
</dbReference>
<dbReference type="CDD" id="cd00190">
    <property type="entry name" value="Tryp_SPc"/>
    <property type="match status" value="1"/>
</dbReference>
<dbReference type="FunFam" id="2.40.10.10:FF:000021">
    <property type="entry name" value="Kallikrein 1"/>
    <property type="match status" value="1"/>
</dbReference>
<dbReference type="FunFam" id="2.40.10.10:FF:000010">
    <property type="entry name" value="Kallikrein related peptidase 11"/>
    <property type="match status" value="1"/>
</dbReference>
<dbReference type="Gene3D" id="2.40.10.10">
    <property type="entry name" value="Trypsin-like serine proteases"/>
    <property type="match status" value="2"/>
</dbReference>
<dbReference type="InterPro" id="IPR009003">
    <property type="entry name" value="Peptidase_S1_PA"/>
</dbReference>
<dbReference type="InterPro" id="IPR043504">
    <property type="entry name" value="Peptidase_S1_PA_chymotrypsin"/>
</dbReference>
<dbReference type="InterPro" id="IPR001314">
    <property type="entry name" value="Peptidase_S1A"/>
</dbReference>
<dbReference type="InterPro" id="IPR001254">
    <property type="entry name" value="Trypsin_dom"/>
</dbReference>
<dbReference type="InterPro" id="IPR018114">
    <property type="entry name" value="TRYPSIN_HIS"/>
</dbReference>
<dbReference type="InterPro" id="IPR033116">
    <property type="entry name" value="TRYPSIN_SER"/>
</dbReference>
<dbReference type="PANTHER" id="PTHR24271:SF47">
    <property type="entry name" value="KALLIKREIN-1"/>
    <property type="match status" value="1"/>
</dbReference>
<dbReference type="PANTHER" id="PTHR24271">
    <property type="entry name" value="KALLIKREIN-RELATED"/>
    <property type="match status" value="1"/>
</dbReference>
<dbReference type="Pfam" id="PF00089">
    <property type="entry name" value="Trypsin"/>
    <property type="match status" value="1"/>
</dbReference>
<dbReference type="PRINTS" id="PR00722">
    <property type="entry name" value="CHYMOTRYPSIN"/>
</dbReference>
<dbReference type="SMART" id="SM00020">
    <property type="entry name" value="Tryp_SPc"/>
    <property type="match status" value="1"/>
</dbReference>
<dbReference type="SUPFAM" id="SSF50494">
    <property type="entry name" value="Trypsin-like serine proteases"/>
    <property type="match status" value="1"/>
</dbReference>
<dbReference type="PROSITE" id="PS50240">
    <property type="entry name" value="TRYPSIN_DOM"/>
    <property type="match status" value="1"/>
</dbReference>
<dbReference type="PROSITE" id="PS00134">
    <property type="entry name" value="TRYPSIN_HIS"/>
    <property type="match status" value="1"/>
</dbReference>
<dbReference type="PROSITE" id="PS00135">
    <property type="entry name" value="TRYPSIN_SER"/>
    <property type="match status" value="1"/>
</dbReference>
<evidence type="ECO:0000250" key="1"/>
<evidence type="ECO:0000255" key="2"/>
<evidence type="ECO:0000255" key="3">
    <source>
        <dbReference type="PROSITE-ProRule" id="PRU00274"/>
    </source>
</evidence>
<evidence type="ECO:0000269" key="4">
    <source>
    </source>
</evidence>
<evidence type="ECO:0000305" key="5"/>
<evidence type="ECO:0007829" key="6">
    <source>
        <dbReference type="PDB" id="1GVZ"/>
    </source>
</evidence>
<reference key="1">
    <citation type="journal article" date="2004" name="Genomics">
        <title>Taxon-specific evolution of glandular kallikrein genes and identification of a progenitor of prostate-specific antigen.</title>
        <authorList>
            <person name="Olsson A.Y."/>
            <person name="Lilja H."/>
            <person name="Lundwall A."/>
        </authorList>
    </citation>
    <scope>NUCLEOTIDE SEQUENCE [MRNA]</scope>
    <source>
        <tissue>Prostate</tissue>
    </source>
</reference>
<reference key="2">
    <citation type="journal article" date="2002" name="J. Mol. Biol.">
        <title>Crystal structure of a prostate kallikrein isolated from stallion seminal plasma: a homologue of human PSA.</title>
        <authorList>
            <person name="Carvalho A.L."/>
            <person name="Sanz L."/>
            <person name="Barettino D."/>
            <person name="Romero A."/>
            <person name="Calvete J.J."/>
            <person name="Romao M.J."/>
        </authorList>
    </citation>
    <scope>NUCLEOTIDE SEQUENCE [MRNA] OF 62-252</scope>
    <scope>SUBCELLULAR LOCATION</scope>
    <scope>TISSUE SPECIFICITY</scope>
    <scope>X-RAY CRYSTALLOGRAPHY (1.42 ANGSTROMS) OF 25-261</scope>
    <source>
        <tissue>Prostate</tissue>
    </source>
</reference>
<feature type="signal peptide" evidence="5">
    <location>
        <begin position="1"/>
        <end position="17"/>
    </location>
</feature>
<feature type="propeptide" id="PRO_0000027921" description="Activation peptide" evidence="5">
    <location>
        <begin position="18"/>
        <end position="24"/>
    </location>
</feature>
<feature type="chain" id="PRO_0000027922" description="Kallikrein-1E2">
    <location>
        <begin position="25"/>
        <end position="261"/>
    </location>
</feature>
<feature type="domain" description="Peptidase S1" evidence="3">
    <location>
        <begin position="25"/>
        <end position="258"/>
    </location>
</feature>
<feature type="active site" description="Charge relay system" evidence="1">
    <location>
        <position position="65"/>
    </location>
</feature>
<feature type="active site" description="Charge relay system" evidence="1">
    <location>
        <position position="120"/>
    </location>
</feature>
<feature type="active site" description="Charge relay system" evidence="1">
    <location>
        <position position="213"/>
    </location>
</feature>
<feature type="glycosylation site" description="N-linked (GlcNAc...) asparagine" evidence="2">
    <location>
        <position position="79"/>
    </location>
</feature>
<feature type="disulfide bond">
    <location>
        <begin position="31"/>
        <end position="173"/>
    </location>
</feature>
<feature type="disulfide bond">
    <location>
        <begin position="50"/>
        <end position="66"/>
    </location>
</feature>
<feature type="disulfide bond">
    <location>
        <begin position="152"/>
        <end position="219"/>
    </location>
</feature>
<feature type="disulfide bond">
    <location>
        <begin position="184"/>
        <end position="198"/>
    </location>
</feature>
<feature type="disulfide bond">
    <location>
        <begin position="209"/>
        <end position="234"/>
    </location>
</feature>
<feature type="sequence conflict" description="In Ref. 2; CAD20985." evidence="5" ref="2">
    <original>E</original>
    <variation>K</variation>
    <location>
        <position position="82"/>
    </location>
</feature>
<feature type="sequence conflict" description="In Ref. 2." evidence="5" ref="2">
    <original>L</original>
    <variation>K</variation>
    <location>
        <position position="250"/>
    </location>
</feature>
<feature type="strand" evidence="6">
    <location>
        <begin position="39"/>
        <end position="44"/>
    </location>
</feature>
<feature type="strand" evidence="6">
    <location>
        <begin position="47"/>
        <end position="56"/>
    </location>
</feature>
<feature type="strand" evidence="6">
    <location>
        <begin position="59"/>
        <end position="62"/>
    </location>
</feature>
<feature type="helix" evidence="6">
    <location>
        <begin position="64"/>
        <end position="66"/>
    </location>
</feature>
<feature type="strand" evidence="6">
    <location>
        <begin position="72"/>
        <end position="76"/>
    </location>
</feature>
<feature type="strand" evidence="6">
    <location>
        <begin position="88"/>
        <end position="90"/>
    </location>
</feature>
<feature type="strand" evidence="6">
    <location>
        <begin position="92"/>
        <end position="97"/>
    </location>
</feature>
<feature type="helix" evidence="6">
    <location>
        <begin position="103"/>
        <end position="107"/>
    </location>
</feature>
<feature type="strand" evidence="6">
    <location>
        <begin position="122"/>
        <end position="128"/>
    </location>
</feature>
<feature type="strand" evidence="6">
    <location>
        <begin position="151"/>
        <end position="158"/>
    </location>
</feature>
<feature type="turn" evidence="6">
    <location>
        <begin position="162"/>
        <end position="164"/>
    </location>
</feature>
<feature type="strand" evidence="6">
    <location>
        <begin position="166"/>
        <end position="179"/>
    </location>
</feature>
<feature type="helix" evidence="6">
    <location>
        <begin position="181"/>
        <end position="184"/>
    </location>
</feature>
<feature type="helix" evidence="6">
    <location>
        <begin position="189"/>
        <end position="191"/>
    </location>
</feature>
<feature type="strand" evidence="6">
    <location>
        <begin position="196"/>
        <end position="200"/>
    </location>
</feature>
<feature type="helix" evidence="6">
    <location>
        <begin position="210"/>
        <end position="212"/>
    </location>
</feature>
<feature type="strand" evidence="6">
    <location>
        <begin position="216"/>
        <end position="219"/>
    </location>
</feature>
<feature type="strand" evidence="6">
    <location>
        <begin position="222"/>
        <end position="227"/>
    </location>
</feature>
<feature type="strand" evidence="6">
    <location>
        <begin position="231"/>
        <end position="233"/>
    </location>
</feature>
<feature type="turn" evidence="6">
    <location>
        <begin position="237"/>
        <end position="239"/>
    </location>
</feature>
<feature type="strand" evidence="6">
    <location>
        <begin position="243"/>
        <end position="246"/>
    </location>
</feature>
<feature type="helix" evidence="6">
    <location>
        <begin position="247"/>
        <end position="249"/>
    </location>
</feature>
<feature type="helix" evidence="6">
    <location>
        <begin position="250"/>
        <end position="260"/>
    </location>
</feature>
<name>KLK2_HORSE</name>
<organism>
    <name type="scientific">Equus caballus</name>
    <name type="common">Horse</name>
    <dbReference type="NCBI Taxonomy" id="9796"/>
    <lineage>
        <taxon>Eukaryota</taxon>
        <taxon>Metazoa</taxon>
        <taxon>Chordata</taxon>
        <taxon>Craniata</taxon>
        <taxon>Vertebrata</taxon>
        <taxon>Euteleostomi</taxon>
        <taxon>Mammalia</taxon>
        <taxon>Eutheria</taxon>
        <taxon>Laurasiatheria</taxon>
        <taxon>Perissodactyla</taxon>
        <taxon>Equidae</taxon>
        <taxon>Equus</taxon>
    </lineage>
</organism>
<proteinExistence type="evidence at protein level"/>
<comment type="function">
    <text>Glandular kallikreins cleave Met-Lys and Arg-Ser bonds in kininogen to release Lys-bradykinin.</text>
</comment>
<comment type="catalytic activity">
    <reaction>
        <text>Preferential cleavage of Arg-|-Xaa bonds in small molecule substrates. Highly selective action to release kallidin (lysyl-bradykinin) from kininogen involves hydrolysis of Met-|-Xaa or Leu-|-Xaa.</text>
        <dbReference type="EC" id="3.4.21.35"/>
    </reaction>
</comment>
<comment type="subcellular location">
    <subcellularLocation>
        <location evidence="4">Secreted</location>
    </subcellularLocation>
</comment>
<comment type="tissue specificity">
    <text evidence="4">Detected in prostate and semen.</text>
</comment>
<comment type="similarity">
    <text evidence="3">Belongs to the peptidase S1 family. Kallikrein subfamily.</text>
</comment>
<accession>Q6H321</accession>
<accession>Q8WMN9</accession>
<gene>
    <name type="primary">KLK1E2</name>
</gene>
<sequence>MWFLVLCLDLSLGETGALPPIQSRIIGGWECEKHSKPWQVAVYHQGHFQCGGVLVHPQWVLTAAHCMSDDYQIWLGRHNLSEDEDTAQFHQVSDSFLDPQFDLSLLKKKYLRPYDDISHDLMLLRLAQPARITDAVKILDLPTQEPKLGSTCYTSGWGLISTFTNRGSGTLQCVELRLQSNEKCARAYPEKMTEFVLCATHRDDSGSICLGDSGGALICDGVFQGITSWGYSECADFNDNFVFTKVMPHLKWIKETIEKNS</sequence>
<protein>
    <recommendedName>
        <fullName>Kallikrein-1E2</fullName>
        <ecNumber>3.4.21.35</ecNumber>
    </recommendedName>
    <alternativeName>
        <fullName>Glandular kallikrein</fullName>
    </alternativeName>
    <alternativeName>
        <fullName>HPK</fullName>
    </alternativeName>
</protein>